<sequence length="115" mass="12479">MAGMVLGVGAGVFLLALLWVLVLLLCVLLCRASGIARFSIIFVFLGALIITTVLLLFPRASEFPAPQGEMKIVDAFFIGRYVLLAFLSAVFLGGLFLLLTHHVLEPIYAKPLRSC</sequence>
<keyword id="KW-0966">Cell projection</keyword>
<keyword id="KW-0472">Membrane</keyword>
<keyword id="KW-1185">Reference proteome</keyword>
<keyword id="KW-0812">Transmembrane</keyword>
<keyword id="KW-1133">Transmembrane helix</keyword>
<organism>
    <name type="scientific">Rattus norvegicus</name>
    <name type="common">Rat</name>
    <dbReference type="NCBI Taxonomy" id="10116"/>
    <lineage>
        <taxon>Eukaryota</taxon>
        <taxon>Metazoa</taxon>
        <taxon>Chordata</taxon>
        <taxon>Craniata</taxon>
        <taxon>Vertebrata</taxon>
        <taxon>Euteleostomi</taxon>
        <taxon>Mammalia</taxon>
        <taxon>Eutheria</taxon>
        <taxon>Euarchontoglires</taxon>
        <taxon>Glires</taxon>
        <taxon>Rodentia</taxon>
        <taxon>Myomorpha</taxon>
        <taxon>Muroidea</taxon>
        <taxon>Muridae</taxon>
        <taxon>Murinae</taxon>
        <taxon>Rattus</taxon>
    </lineage>
</organism>
<accession>Q5U3Y9</accession>
<name>TM218_RAT</name>
<protein>
    <recommendedName>
        <fullName>Transmembrane protein 218</fullName>
    </recommendedName>
</protein>
<feature type="chain" id="PRO_0000321838" description="Transmembrane protein 218">
    <location>
        <begin position="1"/>
        <end position="115"/>
    </location>
</feature>
<feature type="transmembrane region" description="Helical" evidence="3">
    <location>
        <begin position="5"/>
        <end position="25"/>
    </location>
</feature>
<feature type="transmembrane region" description="Helical" evidence="3">
    <location>
        <begin position="38"/>
        <end position="58"/>
    </location>
</feature>
<feature type="transmembrane region" description="Helical" evidence="3">
    <location>
        <begin position="81"/>
        <end position="101"/>
    </location>
</feature>
<evidence type="ECO:0000250" key="1">
    <source>
        <dbReference type="UniProtKB" id="A2RU14"/>
    </source>
</evidence>
<evidence type="ECO:0000250" key="2">
    <source>
        <dbReference type="UniProtKB" id="Q9CQ44"/>
    </source>
</evidence>
<evidence type="ECO:0000255" key="3"/>
<evidence type="ECO:0000305" key="4"/>
<comment type="function">
    <text evidence="2">May be involved in ciliary biogenesis or function.</text>
</comment>
<comment type="subunit">
    <text evidence="1">Interacts with TMEM67.</text>
</comment>
<comment type="subcellular location">
    <subcellularLocation>
        <location evidence="4">Membrane</location>
        <topology evidence="4">Multi-pass membrane protein</topology>
    </subcellularLocation>
    <subcellularLocation>
        <location evidence="2">Cell projection</location>
        <location evidence="2">Cilium</location>
    </subcellularLocation>
    <text evidence="2">Localizes at the transition zone, a region between the basal body and the ciliary axoneme.</text>
</comment>
<comment type="similarity">
    <text evidence="4">Belongs to the TMEM218 family.</text>
</comment>
<gene>
    <name type="primary">Tmem218</name>
</gene>
<dbReference type="EMBL" id="BC085342">
    <property type="protein sequence ID" value="AAH85342.1"/>
    <property type="molecule type" value="mRNA"/>
</dbReference>
<dbReference type="RefSeq" id="NP_001008326.1">
    <property type="nucleotide sequence ID" value="NM_001008325.1"/>
</dbReference>
<dbReference type="RefSeq" id="XP_008764272.1">
    <property type="nucleotide sequence ID" value="XM_008766050.4"/>
</dbReference>
<dbReference type="SMR" id="Q5U3Y9"/>
<dbReference type="FunCoup" id="Q5U3Y9">
    <property type="interactions" value="461"/>
</dbReference>
<dbReference type="STRING" id="10116.ENSRNOP00000012060"/>
<dbReference type="PaxDb" id="10116-ENSRNOP00000012060"/>
<dbReference type="Ensembl" id="ENSRNOT00000012060.7">
    <property type="protein sequence ID" value="ENSRNOP00000012060.3"/>
    <property type="gene ID" value="ENSRNOG00000008757.7"/>
</dbReference>
<dbReference type="GeneID" id="300516"/>
<dbReference type="KEGG" id="rno:300516"/>
<dbReference type="UCSC" id="RGD:1311364">
    <property type="organism name" value="rat"/>
</dbReference>
<dbReference type="AGR" id="RGD:1311364"/>
<dbReference type="CTD" id="219854"/>
<dbReference type="RGD" id="1311364">
    <property type="gene designation" value="Tmem218"/>
</dbReference>
<dbReference type="eggNOG" id="ENOG502S2I1">
    <property type="taxonomic scope" value="Eukaryota"/>
</dbReference>
<dbReference type="GeneTree" id="ENSGT00390000016247"/>
<dbReference type="HOGENOM" id="CLU_169774_0_0_1"/>
<dbReference type="InParanoid" id="Q5U3Y9"/>
<dbReference type="OMA" id="PATEMKI"/>
<dbReference type="OrthoDB" id="5978182at2759"/>
<dbReference type="PhylomeDB" id="Q5U3Y9"/>
<dbReference type="TreeFam" id="TF328597"/>
<dbReference type="PRO" id="PR:Q5U3Y9"/>
<dbReference type="Proteomes" id="UP000002494">
    <property type="component" value="Chromosome 8"/>
</dbReference>
<dbReference type="Bgee" id="ENSRNOG00000008757">
    <property type="expression patterns" value="Expressed in liver and 20 other cell types or tissues"/>
</dbReference>
<dbReference type="GO" id="GO:0005929">
    <property type="term" value="C:cilium"/>
    <property type="evidence" value="ECO:0007669"/>
    <property type="project" value="UniProtKB-SubCell"/>
</dbReference>
<dbReference type="GO" id="GO:0016020">
    <property type="term" value="C:membrane"/>
    <property type="evidence" value="ECO:0007669"/>
    <property type="project" value="UniProtKB-SubCell"/>
</dbReference>
<dbReference type="InterPro" id="IPR026771">
    <property type="entry name" value="Tmem218"/>
</dbReference>
<dbReference type="PANTHER" id="PTHR31622">
    <property type="entry name" value="TRANSMEMBRANE PROTEIN 218"/>
    <property type="match status" value="1"/>
</dbReference>
<dbReference type="PANTHER" id="PTHR31622:SF1">
    <property type="entry name" value="TRANSMEMBRANE PROTEIN 218"/>
    <property type="match status" value="1"/>
</dbReference>
<reference key="1">
    <citation type="journal article" date="2004" name="Genome Res.">
        <title>The status, quality, and expansion of the NIH full-length cDNA project: the Mammalian Gene Collection (MGC).</title>
        <authorList>
            <consortium name="The MGC Project Team"/>
        </authorList>
    </citation>
    <scope>NUCLEOTIDE SEQUENCE [LARGE SCALE MRNA]</scope>
    <source>
        <tissue>Ovary</tissue>
    </source>
</reference>
<proteinExistence type="inferred from homology"/>